<gene>
    <name type="primary">BETV1G</name>
</gene>
<comment type="function">
    <text evidence="1">May be a general steroid carrier protein.</text>
</comment>
<comment type="subcellular location">
    <subcellularLocation>
        <location>Cytoplasm</location>
    </subcellularLocation>
</comment>
<comment type="allergen">
    <text>Causes an allergic reaction in human. Is a cause of type I allergic reactions in Europe, North America and USSR.</text>
</comment>
<comment type="similarity">
    <text evidence="3">Belongs to the BetVI family.</text>
</comment>
<organism>
    <name type="scientific">Betula pendula</name>
    <name type="common">European white birch</name>
    <name type="synonym">Betula verrucosa</name>
    <dbReference type="NCBI Taxonomy" id="3505"/>
    <lineage>
        <taxon>Eukaryota</taxon>
        <taxon>Viridiplantae</taxon>
        <taxon>Streptophyta</taxon>
        <taxon>Embryophyta</taxon>
        <taxon>Tracheophyta</taxon>
        <taxon>Spermatophyta</taxon>
        <taxon>Magnoliopsida</taxon>
        <taxon>eudicotyledons</taxon>
        <taxon>Gunneridae</taxon>
        <taxon>Pentapetalae</taxon>
        <taxon>rosids</taxon>
        <taxon>fabids</taxon>
        <taxon>Fagales</taxon>
        <taxon>Betulaceae</taxon>
        <taxon>Betula</taxon>
    </lineage>
</organism>
<name>BEV1G_BETPN</name>
<sequence length="160" mass="17551">MGVFNYESETTSVIPAARLFKAFILEGDNLIPKVAPQAISSVENIEGNGGPGTIKKINFPEGFPFKYVKDRVDEVDHTNFKYNYSVIEGGPVGDTLEKISNEIKIVATPDGGCVLKISNKYHTKGNHEVKAEQVKASKEMGETLLRAVESYLLAHSDAYN</sequence>
<keyword id="KW-0020">Allergen</keyword>
<keyword id="KW-0963">Cytoplasm</keyword>
<keyword id="KW-0903">Direct protein sequencing</keyword>
<keyword id="KW-0568">Pathogenesis-related protein</keyword>
<keyword id="KW-0611">Plant defense</keyword>
<evidence type="ECO:0000250" key="1"/>
<evidence type="ECO:0000250" key="2">
    <source>
        <dbReference type="UniProtKB" id="P43185"/>
    </source>
</evidence>
<evidence type="ECO:0000305" key="3"/>
<reference key="1">
    <citation type="journal article" date="1995" name="J. Biol. Chem.">
        <title>Isoforms of Bet v 1, the major birch pollen allergen, analyzed by liquid chromatography, mass spectrometry, and cDNA cloning.</title>
        <authorList>
            <person name="Swoboda I."/>
            <person name="Jilek A."/>
            <person name="Ferreira F."/>
            <person name="Engel E."/>
            <person name="Hoffman-Sommergruber K."/>
            <person name="Scheiner O."/>
            <person name="Kraft D."/>
            <person name="Breiteneder H."/>
            <person name="Pittenauer E."/>
            <person name="Schmid E."/>
            <person name="Vicente O."/>
            <person name="Heberle-Bors E."/>
            <person name="Ahorn H."/>
            <person name="Breitenbach M."/>
        </authorList>
    </citation>
    <scope>NUCLEOTIDE SEQUENCE [MRNA]</scope>
    <scope>PARTIAL PROTEIN SEQUENCE</scope>
    <source>
        <tissue>Pollen</tissue>
    </source>
</reference>
<feature type="initiator methionine" description="Removed">
    <location>
        <position position="1"/>
    </location>
</feature>
<feature type="chain" id="PRO_0000154180" description="Major pollen allergen Bet v 1-G">
    <location>
        <begin position="2"/>
        <end position="160"/>
    </location>
</feature>
<feature type="binding site" evidence="2">
    <location>
        <position position="55"/>
    </location>
    <ligand>
        <name>brassinolide</name>
        <dbReference type="ChEBI" id="CHEBI:28277"/>
    </ligand>
</feature>
<feature type="binding site" evidence="2">
    <location>
        <position position="82"/>
    </location>
    <ligand>
        <name>brassinolide</name>
        <dbReference type="ChEBI" id="CHEBI:28277"/>
    </ligand>
</feature>
<feature type="binding site" evidence="2">
    <location>
        <position position="84"/>
    </location>
    <ligand>
        <name>brassinolide</name>
        <dbReference type="ChEBI" id="CHEBI:28277"/>
    </ligand>
</feature>
<feature type="binding site" evidence="2">
    <location>
        <position position="101"/>
    </location>
    <ligand>
        <name>brassinolide</name>
        <dbReference type="ChEBI" id="CHEBI:28277"/>
    </ligand>
</feature>
<accession>P43180</accession>
<proteinExistence type="evidence at protein level"/>
<dbReference type="EMBL" id="X77269">
    <property type="protein sequence ID" value="CAA54485.1"/>
    <property type="molecule type" value="mRNA"/>
</dbReference>
<dbReference type="PIR" id="F55699">
    <property type="entry name" value="F55699"/>
</dbReference>
<dbReference type="SMR" id="P43180"/>
<dbReference type="Allergome" id="100">
    <property type="allergen name" value="Bet v 1.0105"/>
</dbReference>
<dbReference type="Allergome" id="89">
    <property type="allergen name" value="Bet v 1"/>
</dbReference>
<dbReference type="GO" id="GO:0005737">
    <property type="term" value="C:cytoplasm"/>
    <property type="evidence" value="ECO:0007669"/>
    <property type="project" value="UniProtKB-SubCell"/>
</dbReference>
<dbReference type="GO" id="GO:0005634">
    <property type="term" value="C:nucleus"/>
    <property type="evidence" value="ECO:0007669"/>
    <property type="project" value="TreeGrafter"/>
</dbReference>
<dbReference type="GO" id="GO:0010427">
    <property type="term" value="F:abscisic acid binding"/>
    <property type="evidence" value="ECO:0007669"/>
    <property type="project" value="InterPro"/>
</dbReference>
<dbReference type="GO" id="GO:0004864">
    <property type="term" value="F:protein phosphatase inhibitor activity"/>
    <property type="evidence" value="ECO:0007669"/>
    <property type="project" value="InterPro"/>
</dbReference>
<dbReference type="GO" id="GO:0038023">
    <property type="term" value="F:signaling receptor activity"/>
    <property type="evidence" value="ECO:0007669"/>
    <property type="project" value="InterPro"/>
</dbReference>
<dbReference type="GO" id="GO:0009738">
    <property type="term" value="P:abscisic acid-activated signaling pathway"/>
    <property type="evidence" value="ECO:0007669"/>
    <property type="project" value="InterPro"/>
</dbReference>
<dbReference type="GO" id="GO:0006952">
    <property type="term" value="P:defense response"/>
    <property type="evidence" value="ECO:0007669"/>
    <property type="project" value="UniProtKB-KW"/>
</dbReference>
<dbReference type="CDD" id="cd07816">
    <property type="entry name" value="Bet_v1-like"/>
    <property type="match status" value="1"/>
</dbReference>
<dbReference type="FunFam" id="3.30.530.20:FF:000007">
    <property type="entry name" value="Major pollen allergen Bet v 1-A"/>
    <property type="match status" value="1"/>
</dbReference>
<dbReference type="Gene3D" id="3.30.530.20">
    <property type="match status" value="1"/>
</dbReference>
<dbReference type="InterPro" id="IPR000916">
    <property type="entry name" value="Bet_v_I/MLP"/>
</dbReference>
<dbReference type="InterPro" id="IPR024949">
    <property type="entry name" value="Bet_v_I_allergen"/>
</dbReference>
<dbReference type="InterPro" id="IPR050279">
    <property type="entry name" value="Plant_def-hormone_signal"/>
</dbReference>
<dbReference type="InterPro" id="IPR023393">
    <property type="entry name" value="START-like_dom_sf"/>
</dbReference>
<dbReference type="PANTHER" id="PTHR31213">
    <property type="entry name" value="OS08G0374000 PROTEIN-RELATED"/>
    <property type="match status" value="1"/>
</dbReference>
<dbReference type="PANTHER" id="PTHR31213:SF55">
    <property type="entry name" value="STRESS-INDUCED PROTEIN SAM22"/>
    <property type="match status" value="1"/>
</dbReference>
<dbReference type="Pfam" id="PF00407">
    <property type="entry name" value="Bet_v_1"/>
    <property type="match status" value="1"/>
</dbReference>
<dbReference type="PRINTS" id="PR00634">
    <property type="entry name" value="BETALLERGEN"/>
</dbReference>
<dbReference type="SMART" id="SM01037">
    <property type="entry name" value="Bet_v_1"/>
    <property type="match status" value="1"/>
</dbReference>
<dbReference type="SUPFAM" id="SSF55961">
    <property type="entry name" value="Bet v1-like"/>
    <property type="match status" value="1"/>
</dbReference>
<dbReference type="PROSITE" id="PS00451">
    <property type="entry name" value="PATHOGENESIS_BETVI"/>
    <property type="match status" value="1"/>
</dbReference>
<protein>
    <recommendedName>
        <fullName>Major pollen allergen Bet v 1-G</fullName>
    </recommendedName>
    <alternativeName>
        <fullName>Allergen Bet v I-G</fullName>
    </alternativeName>
    <allergenName>Bet v 1-G</allergenName>
</protein>